<accession>A3DJJ8</accession>
<evidence type="ECO:0000255" key="1">
    <source>
        <dbReference type="HAMAP-Rule" id="MF_01315"/>
    </source>
</evidence>
<evidence type="ECO:0000256" key="2">
    <source>
        <dbReference type="SAM" id="MobiDB-lite"/>
    </source>
</evidence>
<evidence type="ECO:0000305" key="3"/>
<sequence length="123" mass="14168">MARIAGVDLPREKRVEIGLTYIFGIGRTLSNEILRKTGINPDTRVKDLTDEEISKLREVIDKEYKVEGDLRREIALNIKRLMEIGCYRGRRHRAGLPVRGQRTKTNARTRKGPKKTVGVQRKK</sequence>
<feature type="chain" id="PRO_0000306591" description="Small ribosomal subunit protein uS13">
    <location>
        <begin position="1"/>
        <end position="123"/>
    </location>
</feature>
<feature type="region of interest" description="Disordered" evidence="2">
    <location>
        <begin position="94"/>
        <end position="123"/>
    </location>
</feature>
<feature type="compositionally biased region" description="Basic residues" evidence="2">
    <location>
        <begin position="101"/>
        <end position="123"/>
    </location>
</feature>
<organism>
    <name type="scientific">Acetivibrio thermocellus (strain ATCC 27405 / DSM 1237 / JCM 9322 / NBRC 103400 / NCIMB 10682 / NRRL B-4536 / VPI 7372)</name>
    <name type="common">Clostridium thermocellum</name>
    <dbReference type="NCBI Taxonomy" id="203119"/>
    <lineage>
        <taxon>Bacteria</taxon>
        <taxon>Bacillati</taxon>
        <taxon>Bacillota</taxon>
        <taxon>Clostridia</taxon>
        <taxon>Eubacteriales</taxon>
        <taxon>Oscillospiraceae</taxon>
        <taxon>Acetivibrio</taxon>
    </lineage>
</organism>
<name>RS13_ACET2</name>
<proteinExistence type="inferred from homology"/>
<protein>
    <recommendedName>
        <fullName evidence="1">Small ribosomal subunit protein uS13</fullName>
    </recommendedName>
    <alternativeName>
        <fullName evidence="3">30S ribosomal protein S13</fullName>
    </alternativeName>
</protein>
<dbReference type="EMBL" id="CP000568">
    <property type="protein sequence ID" value="ABN54127.1"/>
    <property type="molecule type" value="Genomic_DNA"/>
</dbReference>
<dbReference type="RefSeq" id="WP_003514673.1">
    <property type="nucleotide sequence ID" value="NC_009012.1"/>
</dbReference>
<dbReference type="SMR" id="A3DJJ8"/>
<dbReference type="STRING" id="203119.Cthe_2929"/>
<dbReference type="GeneID" id="35804396"/>
<dbReference type="KEGG" id="cth:Cthe_2929"/>
<dbReference type="eggNOG" id="COG0099">
    <property type="taxonomic scope" value="Bacteria"/>
</dbReference>
<dbReference type="HOGENOM" id="CLU_103849_1_2_9"/>
<dbReference type="OrthoDB" id="9803610at2"/>
<dbReference type="Proteomes" id="UP000002145">
    <property type="component" value="Chromosome"/>
</dbReference>
<dbReference type="GO" id="GO:0005829">
    <property type="term" value="C:cytosol"/>
    <property type="evidence" value="ECO:0007669"/>
    <property type="project" value="TreeGrafter"/>
</dbReference>
<dbReference type="GO" id="GO:0015935">
    <property type="term" value="C:small ribosomal subunit"/>
    <property type="evidence" value="ECO:0007669"/>
    <property type="project" value="TreeGrafter"/>
</dbReference>
<dbReference type="GO" id="GO:0019843">
    <property type="term" value="F:rRNA binding"/>
    <property type="evidence" value="ECO:0007669"/>
    <property type="project" value="UniProtKB-UniRule"/>
</dbReference>
<dbReference type="GO" id="GO:0003735">
    <property type="term" value="F:structural constituent of ribosome"/>
    <property type="evidence" value="ECO:0007669"/>
    <property type="project" value="InterPro"/>
</dbReference>
<dbReference type="GO" id="GO:0000049">
    <property type="term" value="F:tRNA binding"/>
    <property type="evidence" value="ECO:0007669"/>
    <property type="project" value="UniProtKB-UniRule"/>
</dbReference>
<dbReference type="GO" id="GO:0006412">
    <property type="term" value="P:translation"/>
    <property type="evidence" value="ECO:0007669"/>
    <property type="project" value="UniProtKB-UniRule"/>
</dbReference>
<dbReference type="FunFam" id="1.10.8.50:FF:000001">
    <property type="entry name" value="30S ribosomal protein S13"/>
    <property type="match status" value="1"/>
</dbReference>
<dbReference type="FunFam" id="4.10.910.10:FF:000001">
    <property type="entry name" value="30S ribosomal protein S13"/>
    <property type="match status" value="1"/>
</dbReference>
<dbReference type="Gene3D" id="1.10.8.50">
    <property type="match status" value="1"/>
</dbReference>
<dbReference type="Gene3D" id="4.10.910.10">
    <property type="entry name" value="30s ribosomal protein s13, domain 2"/>
    <property type="match status" value="1"/>
</dbReference>
<dbReference type="HAMAP" id="MF_01315">
    <property type="entry name" value="Ribosomal_uS13"/>
    <property type="match status" value="1"/>
</dbReference>
<dbReference type="InterPro" id="IPR027437">
    <property type="entry name" value="Rbsml_uS13_C"/>
</dbReference>
<dbReference type="InterPro" id="IPR001892">
    <property type="entry name" value="Ribosomal_uS13"/>
</dbReference>
<dbReference type="InterPro" id="IPR010979">
    <property type="entry name" value="Ribosomal_uS13-like_H2TH"/>
</dbReference>
<dbReference type="InterPro" id="IPR019980">
    <property type="entry name" value="Ribosomal_uS13_bac-type"/>
</dbReference>
<dbReference type="InterPro" id="IPR018269">
    <property type="entry name" value="Ribosomal_uS13_CS"/>
</dbReference>
<dbReference type="NCBIfam" id="TIGR03631">
    <property type="entry name" value="uS13_bact"/>
    <property type="match status" value="1"/>
</dbReference>
<dbReference type="PANTHER" id="PTHR10871">
    <property type="entry name" value="30S RIBOSOMAL PROTEIN S13/40S RIBOSOMAL PROTEIN S18"/>
    <property type="match status" value="1"/>
</dbReference>
<dbReference type="PANTHER" id="PTHR10871:SF1">
    <property type="entry name" value="SMALL RIBOSOMAL SUBUNIT PROTEIN US13M"/>
    <property type="match status" value="1"/>
</dbReference>
<dbReference type="Pfam" id="PF00416">
    <property type="entry name" value="Ribosomal_S13"/>
    <property type="match status" value="1"/>
</dbReference>
<dbReference type="PIRSF" id="PIRSF002134">
    <property type="entry name" value="Ribosomal_S13"/>
    <property type="match status" value="1"/>
</dbReference>
<dbReference type="SUPFAM" id="SSF46946">
    <property type="entry name" value="S13-like H2TH domain"/>
    <property type="match status" value="1"/>
</dbReference>
<dbReference type="PROSITE" id="PS00646">
    <property type="entry name" value="RIBOSOMAL_S13_1"/>
    <property type="match status" value="1"/>
</dbReference>
<dbReference type="PROSITE" id="PS50159">
    <property type="entry name" value="RIBOSOMAL_S13_2"/>
    <property type="match status" value="1"/>
</dbReference>
<reference key="1">
    <citation type="submission" date="2007-02" db="EMBL/GenBank/DDBJ databases">
        <title>Complete sequence of Clostridium thermocellum ATCC 27405.</title>
        <authorList>
            <consortium name="US DOE Joint Genome Institute"/>
            <person name="Copeland A."/>
            <person name="Lucas S."/>
            <person name="Lapidus A."/>
            <person name="Barry K."/>
            <person name="Detter J.C."/>
            <person name="Glavina del Rio T."/>
            <person name="Hammon N."/>
            <person name="Israni S."/>
            <person name="Dalin E."/>
            <person name="Tice H."/>
            <person name="Pitluck S."/>
            <person name="Chertkov O."/>
            <person name="Brettin T."/>
            <person name="Bruce D."/>
            <person name="Han C."/>
            <person name="Tapia R."/>
            <person name="Gilna P."/>
            <person name="Schmutz J."/>
            <person name="Larimer F."/>
            <person name="Land M."/>
            <person name="Hauser L."/>
            <person name="Kyrpides N."/>
            <person name="Mikhailova N."/>
            <person name="Wu J.H.D."/>
            <person name="Newcomb M."/>
            <person name="Richardson P."/>
        </authorList>
    </citation>
    <scope>NUCLEOTIDE SEQUENCE [LARGE SCALE GENOMIC DNA]</scope>
    <source>
        <strain>ATCC 27405 / DSM 1237 / JCM 9322 / NBRC 103400 / NCIMB 10682 / NRRL B-4536 / VPI 7372</strain>
    </source>
</reference>
<comment type="function">
    <text evidence="1">Located at the top of the head of the 30S subunit, it contacts several helices of the 16S rRNA. In the 70S ribosome it contacts the 23S rRNA (bridge B1a) and protein L5 of the 50S subunit (bridge B1b), connecting the 2 subunits; these bridges are implicated in subunit movement. Contacts the tRNAs in the A and P-sites.</text>
</comment>
<comment type="subunit">
    <text evidence="1">Part of the 30S ribosomal subunit. Forms a loose heterodimer with protein S19. Forms two bridges to the 50S subunit in the 70S ribosome.</text>
</comment>
<comment type="similarity">
    <text evidence="1">Belongs to the universal ribosomal protein uS13 family.</text>
</comment>
<keyword id="KW-1185">Reference proteome</keyword>
<keyword id="KW-0687">Ribonucleoprotein</keyword>
<keyword id="KW-0689">Ribosomal protein</keyword>
<keyword id="KW-0694">RNA-binding</keyword>
<keyword id="KW-0699">rRNA-binding</keyword>
<keyword id="KW-0820">tRNA-binding</keyword>
<gene>
    <name evidence="1" type="primary">rpsM</name>
    <name type="ordered locus">Cthe_2929</name>
</gene>